<keyword id="KW-0066">ATP synthesis</keyword>
<keyword id="KW-0067">ATP-binding</keyword>
<keyword id="KW-1005">Bacterial flagellum biogenesis</keyword>
<keyword id="KW-1006">Bacterial flagellum protein export</keyword>
<keyword id="KW-0963">Cytoplasm</keyword>
<keyword id="KW-0375">Hydrogen ion transport</keyword>
<keyword id="KW-0406">Ion transport</keyword>
<keyword id="KW-0547">Nucleotide-binding</keyword>
<keyword id="KW-0653">Protein transport</keyword>
<keyword id="KW-1278">Translocase</keyword>
<keyword id="KW-0813">Transport</keyword>
<sequence length="434" mass="47703">MPLKSLKNRLNQHFELSPRYGSVKKIMPNIVYADGFNPSVGDVVKIEKSDGTECVGMVVVAEKEQFGFTPFNFIEGARAGDKVLFLKEGLNFPVGRNLLGRVLNPLGQVIDNKGVLDYERLAPVITTPIAPLKRGLIDEVFSVGVKSIDGLLTCGKGQKLGIFAGSGVGKSTLMGMITRGCLAPIKVIALIGERGREIPEFIEKNLKGDLSSCVLVVATSDDSPLMRKYGAFCAMSVAEYFKNQGLDVLFIMDSVTRFAMAQREIGLALGEPPTSKGYPPSALSLLPQLMERAGKEENKGSITAFFSVLVEGDDLSDPIADQARSILDGHIVLSRELTDYGIYPPINILNSASRVAKDIISESQNLCARKFRRLYALLKENEMLIRIGSYQMGNDKELDEAIKKKALMEQFLVQDENALQPFEQSFQQLEEILR</sequence>
<protein>
    <recommendedName>
        <fullName>Flagellum-specific ATP synthase</fullName>
        <ecNumber>7.1.2.2</ecNumber>
    </recommendedName>
</protein>
<name>FLII_HELPJ</name>
<reference key="1">
    <citation type="journal article" date="1999" name="Nature">
        <title>Genomic sequence comparison of two unrelated isolates of the human gastric pathogen Helicobacter pylori.</title>
        <authorList>
            <person name="Alm R.A."/>
            <person name="Ling L.-S.L."/>
            <person name="Moir D.T."/>
            <person name="King B.L."/>
            <person name="Brown E.D."/>
            <person name="Doig P.C."/>
            <person name="Smith D.R."/>
            <person name="Noonan B."/>
            <person name="Guild B.C."/>
            <person name="deJonge B.L."/>
            <person name="Carmel G."/>
            <person name="Tummino P.J."/>
            <person name="Caruso A."/>
            <person name="Uria-Nickelsen M."/>
            <person name="Mills D.M."/>
            <person name="Ives C."/>
            <person name="Gibson R."/>
            <person name="Merberg D."/>
            <person name="Mills S.D."/>
            <person name="Jiang Q."/>
            <person name="Taylor D.E."/>
            <person name="Vovis G.F."/>
            <person name="Trust T.J."/>
        </authorList>
    </citation>
    <scope>NUCLEOTIDE SEQUENCE [LARGE SCALE GENOMIC DNA]</scope>
    <source>
        <strain>J99 / ATCC 700824</strain>
    </source>
</reference>
<evidence type="ECO:0000255" key="1"/>
<evidence type="ECO:0000255" key="2">
    <source>
        <dbReference type="PROSITE-ProRule" id="PRU10106"/>
    </source>
</evidence>
<evidence type="ECO:0000305" key="3"/>
<feature type="chain" id="PRO_0000144697" description="Flagellum-specific ATP synthase">
    <location>
        <begin position="1"/>
        <end position="434"/>
    </location>
</feature>
<feature type="binding site" evidence="1">
    <location>
        <begin position="164"/>
        <end position="171"/>
    </location>
    <ligand>
        <name>ATP</name>
        <dbReference type="ChEBI" id="CHEBI:30616"/>
    </ligand>
</feature>
<proteinExistence type="inferred from homology"/>
<accession>Q9ZJJ3</accession>
<gene>
    <name type="primary">fliI</name>
    <name type="ordered locus">jhp_1315</name>
</gene>
<dbReference type="EC" id="7.1.2.2"/>
<dbReference type="EMBL" id="AE001439">
    <property type="protein sequence ID" value="AAD06888.1"/>
    <property type="molecule type" value="Genomic_DNA"/>
</dbReference>
<dbReference type="PIR" id="D71823">
    <property type="entry name" value="D71823"/>
</dbReference>
<dbReference type="RefSeq" id="WP_001128788.1">
    <property type="nucleotide sequence ID" value="NC_000921.1"/>
</dbReference>
<dbReference type="SMR" id="Q9ZJJ3"/>
<dbReference type="KEGG" id="hpj:jhp_1315"/>
<dbReference type="PATRIC" id="fig|85963.30.peg.1247"/>
<dbReference type="eggNOG" id="COG1157">
    <property type="taxonomic scope" value="Bacteria"/>
</dbReference>
<dbReference type="Proteomes" id="UP000000804">
    <property type="component" value="Chromosome"/>
</dbReference>
<dbReference type="GO" id="GO:0005737">
    <property type="term" value="C:cytoplasm"/>
    <property type="evidence" value="ECO:0007669"/>
    <property type="project" value="UniProtKB-SubCell"/>
</dbReference>
<dbReference type="GO" id="GO:0030257">
    <property type="term" value="C:type III protein secretion system complex"/>
    <property type="evidence" value="ECO:0007669"/>
    <property type="project" value="InterPro"/>
</dbReference>
<dbReference type="GO" id="GO:0005524">
    <property type="term" value="F:ATP binding"/>
    <property type="evidence" value="ECO:0007669"/>
    <property type="project" value="UniProtKB-KW"/>
</dbReference>
<dbReference type="GO" id="GO:0016887">
    <property type="term" value="F:ATP hydrolysis activity"/>
    <property type="evidence" value="ECO:0007669"/>
    <property type="project" value="InterPro"/>
</dbReference>
<dbReference type="GO" id="GO:0046933">
    <property type="term" value="F:proton-transporting ATP synthase activity, rotational mechanism"/>
    <property type="evidence" value="ECO:0007669"/>
    <property type="project" value="TreeGrafter"/>
</dbReference>
<dbReference type="GO" id="GO:0044781">
    <property type="term" value="P:bacterial-type flagellum organization"/>
    <property type="evidence" value="ECO:0007669"/>
    <property type="project" value="UniProtKB-KW"/>
</dbReference>
<dbReference type="GO" id="GO:0030254">
    <property type="term" value="P:protein secretion by the type III secretion system"/>
    <property type="evidence" value="ECO:0007669"/>
    <property type="project" value="InterPro"/>
</dbReference>
<dbReference type="CDD" id="cd18114">
    <property type="entry name" value="ATP-synt_flagellum-secretory_path_III_C"/>
    <property type="match status" value="1"/>
</dbReference>
<dbReference type="CDD" id="cd01136">
    <property type="entry name" value="ATPase_flagellum-secretory_path_III"/>
    <property type="match status" value="1"/>
</dbReference>
<dbReference type="FunFam" id="3.40.50.12240:FF:000002">
    <property type="entry name" value="Flagellum-specific ATP synthase FliI"/>
    <property type="match status" value="1"/>
</dbReference>
<dbReference type="Gene3D" id="3.40.50.12240">
    <property type="match status" value="1"/>
</dbReference>
<dbReference type="InterPro" id="IPR003593">
    <property type="entry name" value="AAA+_ATPase"/>
</dbReference>
<dbReference type="InterPro" id="IPR020003">
    <property type="entry name" value="ATPase_a/bsu_AS"/>
</dbReference>
<dbReference type="InterPro" id="IPR050053">
    <property type="entry name" value="ATPase_alpha/beta_chains"/>
</dbReference>
<dbReference type="InterPro" id="IPR000194">
    <property type="entry name" value="ATPase_F1/V1/A1_a/bsu_nucl-bd"/>
</dbReference>
<dbReference type="InterPro" id="IPR005714">
    <property type="entry name" value="ATPase_T3SS_FliI/YscN"/>
</dbReference>
<dbReference type="InterPro" id="IPR027417">
    <property type="entry name" value="P-loop_NTPase"/>
</dbReference>
<dbReference type="InterPro" id="IPR040627">
    <property type="entry name" value="T3SS_ATPase_C"/>
</dbReference>
<dbReference type="NCBIfam" id="TIGR01026">
    <property type="entry name" value="fliI_yscN"/>
    <property type="match status" value="1"/>
</dbReference>
<dbReference type="NCBIfam" id="NF006290">
    <property type="entry name" value="PRK08472.1"/>
    <property type="match status" value="1"/>
</dbReference>
<dbReference type="PANTHER" id="PTHR15184">
    <property type="entry name" value="ATP SYNTHASE"/>
    <property type="match status" value="1"/>
</dbReference>
<dbReference type="PANTHER" id="PTHR15184:SF9">
    <property type="entry name" value="SPI-1 TYPE 3 SECRETION SYSTEM ATPASE"/>
    <property type="match status" value="1"/>
</dbReference>
<dbReference type="Pfam" id="PF00006">
    <property type="entry name" value="ATP-synt_ab"/>
    <property type="match status" value="1"/>
</dbReference>
<dbReference type="Pfam" id="PF18269">
    <property type="entry name" value="T3SS_ATPase_C"/>
    <property type="match status" value="1"/>
</dbReference>
<dbReference type="SMART" id="SM00382">
    <property type="entry name" value="AAA"/>
    <property type="match status" value="1"/>
</dbReference>
<dbReference type="SUPFAM" id="SSF52540">
    <property type="entry name" value="P-loop containing nucleoside triphosphate hydrolases"/>
    <property type="match status" value="1"/>
</dbReference>
<dbReference type="PROSITE" id="PS00152">
    <property type="entry name" value="ATPASE_ALPHA_BETA"/>
    <property type="match status" value="1"/>
</dbReference>
<organism>
    <name type="scientific">Helicobacter pylori (strain J99 / ATCC 700824)</name>
    <name type="common">Campylobacter pylori J99</name>
    <dbReference type="NCBI Taxonomy" id="85963"/>
    <lineage>
        <taxon>Bacteria</taxon>
        <taxon>Pseudomonadati</taxon>
        <taxon>Campylobacterota</taxon>
        <taxon>Epsilonproteobacteria</taxon>
        <taxon>Campylobacterales</taxon>
        <taxon>Helicobacteraceae</taxon>
        <taxon>Helicobacter</taxon>
    </lineage>
</organism>
<comment type="function">
    <text>Probable catalytic subunit of a protein translocase for flagellum-specific export, or a proton translocase involved in local circuits at the flagellum.</text>
</comment>
<comment type="catalytic activity">
    <reaction evidence="2">
        <text>ATP + H2O + 4 H(+)(in) = ADP + phosphate + 5 H(+)(out)</text>
        <dbReference type="Rhea" id="RHEA:57720"/>
        <dbReference type="ChEBI" id="CHEBI:15377"/>
        <dbReference type="ChEBI" id="CHEBI:15378"/>
        <dbReference type="ChEBI" id="CHEBI:30616"/>
        <dbReference type="ChEBI" id="CHEBI:43474"/>
        <dbReference type="ChEBI" id="CHEBI:456216"/>
        <dbReference type="EC" id="7.1.2.2"/>
    </reaction>
</comment>
<comment type="subcellular location">
    <subcellularLocation>
        <location evidence="3">Cytoplasm</location>
    </subcellularLocation>
</comment>
<comment type="similarity">
    <text evidence="3">Belongs to the ATPase alpha/beta chains family.</text>
</comment>